<proteinExistence type="inferred from homology"/>
<name>Y3240_RICB8</name>
<comment type="subcellular location">
    <subcellularLocation>
        <location evidence="1">Cytoplasm</location>
    </subcellularLocation>
</comment>
<comment type="similarity">
    <text evidence="1">Belongs to the TACO1 family.</text>
</comment>
<protein>
    <recommendedName>
        <fullName evidence="1">Probable transcriptional regulatory protein A1I_03240</fullName>
    </recommendedName>
</protein>
<organism>
    <name type="scientific">Rickettsia bellii (strain OSU 85-389)</name>
    <dbReference type="NCBI Taxonomy" id="391896"/>
    <lineage>
        <taxon>Bacteria</taxon>
        <taxon>Pseudomonadati</taxon>
        <taxon>Pseudomonadota</taxon>
        <taxon>Alphaproteobacteria</taxon>
        <taxon>Rickettsiales</taxon>
        <taxon>Rickettsiaceae</taxon>
        <taxon>Rickettsieae</taxon>
        <taxon>Rickettsia</taxon>
        <taxon>belli group</taxon>
    </lineage>
</organism>
<evidence type="ECO:0000255" key="1">
    <source>
        <dbReference type="HAMAP-Rule" id="MF_00693"/>
    </source>
</evidence>
<evidence type="ECO:0000256" key="2">
    <source>
        <dbReference type="SAM" id="MobiDB-lite"/>
    </source>
</evidence>
<keyword id="KW-0963">Cytoplasm</keyword>
<keyword id="KW-0238">DNA-binding</keyword>
<keyword id="KW-0804">Transcription</keyword>
<keyword id="KW-0805">Transcription regulation</keyword>
<reference key="1">
    <citation type="submission" date="2007-09" db="EMBL/GenBank/DDBJ databases">
        <title>Complete genome sequencing of Rickettsia bellii.</title>
        <authorList>
            <person name="Madan A."/>
            <person name="Lee H."/>
            <person name="Madan A."/>
            <person name="Yoon J.-G."/>
            <person name="Ryu G.-Y."/>
            <person name="Dasch G."/>
            <person name="Ereemeva M."/>
        </authorList>
    </citation>
    <scope>NUCLEOTIDE SEQUENCE [LARGE SCALE GENOMIC DNA]</scope>
    <source>
        <strain>OSU 85-389</strain>
    </source>
</reference>
<gene>
    <name type="ordered locus">A1I_03240</name>
</gene>
<accession>A8GVY2</accession>
<sequence>MAGHSKFKNIQHRKGAQDKKRAKVFTKLIREIVTAVKAGSTNPDNNPRLRTALATARSQNLPKERIDKAINSANDSANNENYTEIRYEGYAPGGIAIIVEALTDNKNRTAAEVRSSFTKYGGNLGETGSVNFLFKHCGVIQYPLEISSAENILETAIEAGADDIVSDEVLHTIYTDIENFSKVLEFLTDKYGTAEEAYIGWVPLNTIIIDDKEKAEKLLKLVDLLEESDDVQRVFGNYELSDEIYEILQGSEIICK</sequence>
<feature type="chain" id="PRO_1000045366" description="Probable transcriptional regulatory protein A1I_03240">
    <location>
        <begin position="1"/>
        <end position="256"/>
    </location>
</feature>
<feature type="region of interest" description="Disordered" evidence="2">
    <location>
        <begin position="1"/>
        <end position="21"/>
    </location>
</feature>
<dbReference type="EMBL" id="CP000849">
    <property type="protein sequence ID" value="ABV79009.1"/>
    <property type="molecule type" value="Genomic_DNA"/>
</dbReference>
<dbReference type="RefSeq" id="WP_012151784.1">
    <property type="nucleotide sequence ID" value="NC_009883.1"/>
</dbReference>
<dbReference type="SMR" id="A8GVY2"/>
<dbReference type="KEGG" id="rbo:A1I_03240"/>
<dbReference type="HOGENOM" id="CLU_062974_2_2_5"/>
<dbReference type="GO" id="GO:0005737">
    <property type="term" value="C:cytoplasm"/>
    <property type="evidence" value="ECO:0007669"/>
    <property type="project" value="UniProtKB-SubCell"/>
</dbReference>
<dbReference type="GO" id="GO:0003677">
    <property type="term" value="F:DNA binding"/>
    <property type="evidence" value="ECO:0007669"/>
    <property type="project" value="UniProtKB-UniRule"/>
</dbReference>
<dbReference type="GO" id="GO:0006355">
    <property type="term" value="P:regulation of DNA-templated transcription"/>
    <property type="evidence" value="ECO:0007669"/>
    <property type="project" value="UniProtKB-UniRule"/>
</dbReference>
<dbReference type="FunFam" id="1.10.10.200:FF:000002">
    <property type="entry name" value="Probable transcriptional regulatory protein CLM62_37755"/>
    <property type="match status" value="1"/>
</dbReference>
<dbReference type="Gene3D" id="1.10.10.200">
    <property type="match status" value="1"/>
</dbReference>
<dbReference type="Gene3D" id="3.30.70.980">
    <property type="match status" value="2"/>
</dbReference>
<dbReference type="HAMAP" id="MF_00693">
    <property type="entry name" value="Transcrip_reg_TACO1"/>
    <property type="match status" value="1"/>
</dbReference>
<dbReference type="InterPro" id="IPR017856">
    <property type="entry name" value="Integrase-like_N"/>
</dbReference>
<dbReference type="InterPro" id="IPR048300">
    <property type="entry name" value="TACO1_YebC-like_2nd/3rd_dom"/>
</dbReference>
<dbReference type="InterPro" id="IPR049083">
    <property type="entry name" value="TACO1_YebC_N"/>
</dbReference>
<dbReference type="InterPro" id="IPR002876">
    <property type="entry name" value="Transcrip_reg_TACO1-like"/>
</dbReference>
<dbReference type="InterPro" id="IPR026564">
    <property type="entry name" value="Transcrip_reg_TACO1-like_dom3"/>
</dbReference>
<dbReference type="InterPro" id="IPR029072">
    <property type="entry name" value="YebC-like"/>
</dbReference>
<dbReference type="NCBIfam" id="NF001030">
    <property type="entry name" value="PRK00110.1"/>
    <property type="match status" value="1"/>
</dbReference>
<dbReference type="NCBIfam" id="NF009044">
    <property type="entry name" value="PRK12378.1"/>
    <property type="match status" value="1"/>
</dbReference>
<dbReference type="NCBIfam" id="TIGR01033">
    <property type="entry name" value="YebC/PmpR family DNA-binding transcriptional regulator"/>
    <property type="match status" value="1"/>
</dbReference>
<dbReference type="PANTHER" id="PTHR12532:SF11">
    <property type="match status" value="1"/>
</dbReference>
<dbReference type="PANTHER" id="PTHR12532">
    <property type="entry name" value="TRANSLATIONAL ACTIVATOR OF CYTOCHROME C OXIDASE 1"/>
    <property type="match status" value="1"/>
</dbReference>
<dbReference type="Pfam" id="PF20772">
    <property type="entry name" value="TACO1_YebC_N"/>
    <property type="match status" value="1"/>
</dbReference>
<dbReference type="Pfam" id="PF01709">
    <property type="entry name" value="Transcrip_reg"/>
    <property type="match status" value="1"/>
</dbReference>
<dbReference type="SUPFAM" id="SSF75625">
    <property type="entry name" value="YebC-like"/>
    <property type="match status" value="1"/>
</dbReference>